<gene>
    <name evidence="1" type="primary">ybeY</name>
    <name type="ordered locus">HP_1160</name>
</gene>
<keyword id="KW-0963">Cytoplasm</keyword>
<keyword id="KW-0255">Endonuclease</keyword>
<keyword id="KW-0378">Hydrolase</keyword>
<keyword id="KW-0479">Metal-binding</keyword>
<keyword id="KW-0540">Nuclease</keyword>
<keyword id="KW-1185">Reference proteome</keyword>
<keyword id="KW-0690">Ribosome biogenesis</keyword>
<keyword id="KW-0698">rRNA processing</keyword>
<keyword id="KW-0862">Zinc</keyword>
<name>YBEY_HELPY</name>
<accession>O25775</accession>
<proteinExistence type="inferred from homology"/>
<reference key="1">
    <citation type="journal article" date="1997" name="Nature">
        <title>The complete genome sequence of the gastric pathogen Helicobacter pylori.</title>
        <authorList>
            <person name="Tomb J.-F."/>
            <person name="White O."/>
            <person name="Kerlavage A.R."/>
            <person name="Clayton R.A."/>
            <person name="Sutton G.G."/>
            <person name="Fleischmann R.D."/>
            <person name="Ketchum K.A."/>
            <person name="Klenk H.-P."/>
            <person name="Gill S.R."/>
            <person name="Dougherty B.A."/>
            <person name="Nelson K.E."/>
            <person name="Quackenbush J."/>
            <person name="Zhou L."/>
            <person name="Kirkness E.F."/>
            <person name="Peterson S.N."/>
            <person name="Loftus B.J."/>
            <person name="Richardson D.L."/>
            <person name="Dodson R.J."/>
            <person name="Khalak H.G."/>
            <person name="Glodek A."/>
            <person name="McKenney K."/>
            <person name="FitzGerald L.M."/>
            <person name="Lee N."/>
            <person name="Adams M.D."/>
            <person name="Hickey E.K."/>
            <person name="Berg D.E."/>
            <person name="Gocayne J.D."/>
            <person name="Utterback T.R."/>
            <person name="Peterson J.D."/>
            <person name="Kelley J.M."/>
            <person name="Cotton M.D."/>
            <person name="Weidman J.F."/>
            <person name="Fujii C."/>
            <person name="Bowman C."/>
            <person name="Watthey L."/>
            <person name="Wallin E."/>
            <person name="Hayes W.S."/>
            <person name="Borodovsky M."/>
            <person name="Karp P.D."/>
            <person name="Smith H.O."/>
            <person name="Fraser C.M."/>
            <person name="Venter J.C."/>
        </authorList>
    </citation>
    <scope>NUCLEOTIDE SEQUENCE [LARGE SCALE GENOMIC DNA]</scope>
    <source>
        <strain>ATCC 700392 / 26695</strain>
    </source>
</reference>
<protein>
    <recommendedName>
        <fullName evidence="1">Endoribonuclease YbeY</fullName>
        <ecNumber evidence="1">3.1.-.-</ecNumber>
    </recommendedName>
</protein>
<comment type="function">
    <text evidence="1">Single strand-specific metallo-endoribonuclease involved in late-stage 70S ribosome quality control and in maturation of the 3' terminus of the 16S rRNA.</text>
</comment>
<comment type="cofactor">
    <cofactor evidence="1">
        <name>Zn(2+)</name>
        <dbReference type="ChEBI" id="CHEBI:29105"/>
    </cofactor>
    <text evidence="1">Binds 1 zinc ion.</text>
</comment>
<comment type="subcellular location">
    <subcellularLocation>
        <location evidence="1">Cytoplasm</location>
    </subcellularLocation>
</comment>
<comment type="similarity">
    <text evidence="1">Belongs to the endoribonuclease YbeY family.</text>
</comment>
<evidence type="ECO:0000255" key="1">
    <source>
        <dbReference type="HAMAP-Rule" id="MF_00009"/>
    </source>
</evidence>
<dbReference type="EC" id="3.1.-.-" evidence="1"/>
<dbReference type="EMBL" id="AE000511">
    <property type="protein sequence ID" value="AAD08206.1"/>
    <property type="molecule type" value="Genomic_DNA"/>
</dbReference>
<dbReference type="PIR" id="H64664">
    <property type="entry name" value="H64664"/>
</dbReference>
<dbReference type="RefSeq" id="NP_207951.1">
    <property type="nucleotide sequence ID" value="NC_000915.1"/>
</dbReference>
<dbReference type="RefSeq" id="WP_000889553.1">
    <property type="nucleotide sequence ID" value="NC_018939.1"/>
</dbReference>
<dbReference type="SMR" id="O25775"/>
<dbReference type="DIP" id="DIP-3492N"/>
<dbReference type="FunCoup" id="O25775">
    <property type="interactions" value="200"/>
</dbReference>
<dbReference type="IntAct" id="O25775">
    <property type="interactions" value="10"/>
</dbReference>
<dbReference type="MINT" id="O25775"/>
<dbReference type="STRING" id="85962.HP_1160"/>
<dbReference type="PaxDb" id="85962-C694_05990"/>
<dbReference type="EnsemblBacteria" id="AAD08206">
    <property type="protein sequence ID" value="AAD08206"/>
    <property type="gene ID" value="HP_1160"/>
</dbReference>
<dbReference type="KEGG" id="heo:C694_05990"/>
<dbReference type="KEGG" id="hpy:HP_1160"/>
<dbReference type="PATRIC" id="fig|85962.47.peg.1244"/>
<dbReference type="eggNOG" id="COG0319">
    <property type="taxonomic scope" value="Bacteria"/>
</dbReference>
<dbReference type="InParanoid" id="O25775"/>
<dbReference type="OrthoDB" id="9807740at2"/>
<dbReference type="PhylomeDB" id="O25775"/>
<dbReference type="Proteomes" id="UP000000429">
    <property type="component" value="Chromosome"/>
</dbReference>
<dbReference type="GO" id="GO:0005737">
    <property type="term" value="C:cytoplasm"/>
    <property type="evidence" value="ECO:0007669"/>
    <property type="project" value="UniProtKB-SubCell"/>
</dbReference>
<dbReference type="GO" id="GO:0004222">
    <property type="term" value="F:metalloendopeptidase activity"/>
    <property type="evidence" value="ECO:0007669"/>
    <property type="project" value="InterPro"/>
</dbReference>
<dbReference type="GO" id="GO:0004521">
    <property type="term" value="F:RNA endonuclease activity"/>
    <property type="evidence" value="ECO:0007669"/>
    <property type="project" value="UniProtKB-UniRule"/>
</dbReference>
<dbReference type="GO" id="GO:0008270">
    <property type="term" value="F:zinc ion binding"/>
    <property type="evidence" value="ECO:0007669"/>
    <property type="project" value="UniProtKB-UniRule"/>
</dbReference>
<dbReference type="GO" id="GO:0006364">
    <property type="term" value="P:rRNA processing"/>
    <property type="evidence" value="ECO:0007669"/>
    <property type="project" value="UniProtKB-UniRule"/>
</dbReference>
<dbReference type="Gene3D" id="3.40.390.30">
    <property type="entry name" value="Metalloproteases ('zincins'), catalytic domain"/>
    <property type="match status" value="1"/>
</dbReference>
<dbReference type="HAMAP" id="MF_00009">
    <property type="entry name" value="Endoribonucl_YbeY"/>
    <property type="match status" value="1"/>
</dbReference>
<dbReference type="InterPro" id="IPR023091">
    <property type="entry name" value="MetalPrtase_cat_dom_sf_prd"/>
</dbReference>
<dbReference type="InterPro" id="IPR002036">
    <property type="entry name" value="YbeY"/>
</dbReference>
<dbReference type="InterPro" id="IPR020549">
    <property type="entry name" value="YbeY_CS"/>
</dbReference>
<dbReference type="NCBIfam" id="TIGR00043">
    <property type="entry name" value="rRNA maturation RNase YbeY"/>
    <property type="match status" value="1"/>
</dbReference>
<dbReference type="PANTHER" id="PTHR46986">
    <property type="entry name" value="ENDORIBONUCLEASE YBEY, CHLOROPLASTIC"/>
    <property type="match status" value="1"/>
</dbReference>
<dbReference type="PANTHER" id="PTHR46986:SF1">
    <property type="entry name" value="ENDORIBONUCLEASE YBEY, CHLOROPLASTIC"/>
    <property type="match status" value="1"/>
</dbReference>
<dbReference type="Pfam" id="PF02130">
    <property type="entry name" value="YbeY"/>
    <property type="match status" value="1"/>
</dbReference>
<dbReference type="SUPFAM" id="SSF55486">
    <property type="entry name" value="Metalloproteases ('zincins'), catalytic domain"/>
    <property type="match status" value="1"/>
</dbReference>
<dbReference type="PROSITE" id="PS01306">
    <property type="entry name" value="UPF0054"/>
    <property type="match status" value="1"/>
</dbReference>
<sequence>MLEIDNQTPLESDFLLLEKIANVLAPTQIIELVLVSDETIREINKDLRGCDYATDVLSFPLEAIPHTPLGSVVINAPLAQTNALKLGHSLENEIALLFIHGVLHLLGYDHEKDKGEQRQKESELIKAFNLPLSLIERTQD</sequence>
<feature type="chain" id="PRO_0000102467" description="Endoribonuclease YbeY">
    <location>
        <begin position="1"/>
        <end position="140"/>
    </location>
</feature>
<feature type="binding site" evidence="1">
    <location>
        <position position="100"/>
    </location>
    <ligand>
        <name>Zn(2+)</name>
        <dbReference type="ChEBI" id="CHEBI:29105"/>
        <note>catalytic</note>
    </ligand>
</feature>
<feature type="binding site" evidence="1">
    <location>
        <position position="104"/>
    </location>
    <ligand>
        <name>Zn(2+)</name>
        <dbReference type="ChEBI" id="CHEBI:29105"/>
        <note>catalytic</note>
    </ligand>
</feature>
<feature type="binding site" evidence="1">
    <location>
        <position position="110"/>
    </location>
    <ligand>
        <name>Zn(2+)</name>
        <dbReference type="ChEBI" id="CHEBI:29105"/>
        <note>catalytic</note>
    </ligand>
</feature>
<organism>
    <name type="scientific">Helicobacter pylori (strain ATCC 700392 / 26695)</name>
    <name type="common">Campylobacter pylori</name>
    <dbReference type="NCBI Taxonomy" id="85962"/>
    <lineage>
        <taxon>Bacteria</taxon>
        <taxon>Pseudomonadati</taxon>
        <taxon>Campylobacterota</taxon>
        <taxon>Epsilonproteobacteria</taxon>
        <taxon>Campylobacterales</taxon>
        <taxon>Helicobacteraceae</taxon>
        <taxon>Helicobacter</taxon>
    </lineage>
</organism>